<reference key="1">
    <citation type="journal article" date="2000" name="Nature">
        <title>Sequence and analysis of chromosome 3 of the plant Arabidopsis thaliana.</title>
        <authorList>
            <person name="Salanoubat M."/>
            <person name="Lemcke K."/>
            <person name="Rieger M."/>
            <person name="Ansorge W."/>
            <person name="Unseld M."/>
            <person name="Fartmann B."/>
            <person name="Valle G."/>
            <person name="Bloecker H."/>
            <person name="Perez-Alonso M."/>
            <person name="Obermaier B."/>
            <person name="Delseny M."/>
            <person name="Boutry M."/>
            <person name="Grivell L.A."/>
            <person name="Mache R."/>
            <person name="Puigdomenech P."/>
            <person name="De Simone V."/>
            <person name="Choisne N."/>
            <person name="Artiguenave F."/>
            <person name="Robert C."/>
            <person name="Brottier P."/>
            <person name="Wincker P."/>
            <person name="Cattolico L."/>
            <person name="Weissenbach J."/>
            <person name="Saurin W."/>
            <person name="Quetier F."/>
            <person name="Schaefer M."/>
            <person name="Mueller-Auer S."/>
            <person name="Gabel C."/>
            <person name="Fuchs M."/>
            <person name="Benes V."/>
            <person name="Wurmbach E."/>
            <person name="Drzonek H."/>
            <person name="Erfle H."/>
            <person name="Jordan N."/>
            <person name="Bangert S."/>
            <person name="Wiedelmann R."/>
            <person name="Kranz H."/>
            <person name="Voss H."/>
            <person name="Holland R."/>
            <person name="Brandt P."/>
            <person name="Nyakatura G."/>
            <person name="Vezzi A."/>
            <person name="D'Angelo M."/>
            <person name="Pallavicini A."/>
            <person name="Toppo S."/>
            <person name="Simionati B."/>
            <person name="Conrad A."/>
            <person name="Hornischer K."/>
            <person name="Kauer G."/>
            <person name="Loehnert T.-H."/>
            <person name="Nordsiek G."/>
            <person name="Reichelt J."/>
            <person name="Scharfe M."/>
            <person name="Schoen O."/>
            <person name="Bargues M."/>
            <person name="Terol J."/>
            <person name="Climent J."/>
            <person name="Navarro P."/>
            <person name="Collado C."/>
            <person name="Perez-Perez A."/>
            <person name="Ottenwaelder B."/>
            <person name="Duchemin D."/>
            <person name="Cooke R."/>
            <person name="Laudie M."/>
            <person name="Berger-Llauro C."/>
            <person name="Purnelle B."/>
            <person name="Masuy D."/>
            <person name="de Haan M."/>
            <person name="Maarse A.C."/>
            <person name="Alcaraz J.-P."/>
            <person name="Cottet A."/>
            <person name="Casacuberta E."/>
            <person name="Monfort A."/>
            <person name="Argiriou A."/>
            <person name="Flores M."/>
            <person name="Liguori R."/>
            <person name="Vitale D."/>
            <person name="Mannhaupt G."/>
            <person name="Haase D."/>
            <person name="Schoof H."/>
            <person name="Rudd S."/>
            <person name="Zaccaria P."/>
            <person name="Mewes H.-W."/>
            <person name="Mayer K.F.X."/>
            <person name="Kaul S."/>
            <person name="Town C.D."/>
            <person name="Koo H.L."/>
            <person name="Tallon L.J."/>
            <person name="Jenkins J."/>
            <person name="Rooney T."/>
            <person name="Rizzo M."/>
            <person name="Walts A."/>
            <person name="Utterback T."/>
            <person name="Fujii C.Y."/>
            <person name="Shea T.P."/>
            <person name="Creasy T.H."/>
            <person name="Haas B."/>
            <person name="Maiti R."/>
            <person name="Wu D."/>
            <person name="Peterson J."/>
            <person name="Van Aken S."/>
            <person name="Pai G."/>
            <person name="Militscher J."/>
            <person name="Sellers P."/>
            <person name="Gill J.E."/>
            <person name="Feldblyum T.V."/>
            <person name="Preuss D."/>
            <person name="Lin X."/>
            <person name="Nierman W.C."/>
            <person name="Salzberg S.L."/>
            <person name="White O."/>
            <person name="Venter J.C."/>
            <person name="Fraser C.M."/>
            <person name="Kaneko T."/>
            <person name="Nakamura Y."/>
            <person name="Sato S."/>
            <person name="Kato T."/>
            <person name="Asamizu E."/>
            <person name="Sasamoto S."/>
            <person name="Kimura T."/>
            <person name="Idesawa K."/>
            <person name="Kawashima K."/>
            <person name="Kishida Y."/>
            <person name="Kiyokawa C."/>
            <person name="Kohara M."/>
            <person name="Matsumoto M."/>
            <person name="Matsuno A."/>
            <person name="Muraki A."/>
            <person name="Nakayama S."/>
            <person name="Nakazaki N."/>
            <person name="Shinpo S."/>
            <person name="Takeuchi C."/>
            <person name="Wada T."/>
            <person name="Watanabe A."/>
            <person name="Yamada M."/>
            <person name="Yasuda M."/>
            <person name="Tabata S."/>
        </authorList>
    </citation>
    <scope>NUCLEOTIDE SEQUENCE [LARGE SCALE GENOMIC DNA]</scope>
    <source>
        <strain>cv. Columbia</strain>
    </source>
</reference>
<reference key="2">
    <citation type="journal article" date="2017" name="Plant J.">
        <title>Araport11: a complete reannotation of the Arabidopsis thaliana reference genome.</title>
        <authorList>
            <person name="Cheng C.Y."/>
            <person name="Krishnakumar V."/>
            <person name="Chan A.P."/>
            <person name="Thibaud-Nissen F."/>
            <person name="Schobel S."/>
            <person name="Town C.D."/>
        </authorList>
    </citation>
    <scope>GENOME REANNOTATION</scope>
    <source>
        <strain>cv. Columbia</strain>
    </source>
</reference>
<reference key="3">
    <citation type="journal article" date="2003" name="Science">
        <title>Empirical analysis of transcriptional activity in the Arabidopsis genome.</title>
        <authorList>
            <person name="Yamada K."/>
            <person name="Lim J."/>
            <person name="Dale J.M."/>
            <person name="Chen H."/>
            <person name="Shinn P."/>
            <person name="Palm C.J."/>
            <person name="Southwick A.M."/>
            <person name="Wu H.C."/>
            <person name="Kim C.J."/>
            <person name="Nguyen M."/>
            <person name="Pham P.K."/>
            <person name="Cheuk R.F."/>
            <person name="Karlin-Newmann G."/>
            <person name="Liu S.X."/>
            <person name="Lam B."/>
            <person name="Sakano H."/>
            <person name="Wu T."/>
            <person name="Yu G."/>
            <person name="Miranda M."/>
            <person name="Quach H.L."/>
            <person name="Tripp M."/>
            <person name="Chang C.H."/>
            <person name="Lee J.M."/>
            <person name="Toriumi M.J."/>
            <person name="Chan M.M."/>
            <person name="Tang C.C."/>
            <person name="Onodera C.S."/>
            <person name="Deng J.M."/>
            <person name="Akiyama K."/>
            <person name="Ansari Y."/>
            <person name="Arakawa T."/>
            <person name="Banh J."/>
            <person name="Banno F."/>
            <person name="Bowser L."/>
            <person name="Brooks S.Y."/>
            <person name="Carninci P."/>
            <person name="Chao Q."/>
            <person name="Choy N."/>
            <person name="Enju A."/>
            <person name="Goldsmith A.D."/>
            <person name="Gurjal M."/>
            <person name="Hansen N.F."/>
            <person name="Hayashizaki Y."/>
            <person name="Johnson-Hopson C."/>
            <person name="Hsuan V.W."/>
            <person name="Iida K."/>
            <person name="Karnes M."/>
            <person name="Khan S."/>
            <person name="Koesema E."/>
            <person name="Ishida J."/>
            <person name="Jiang P.X."/>
            <person name="Jones T."/>
            <person name="Kawai J."/>
            <person name="Kamiya A."/>
            <person name="Meyers C."/>
            <person name="Nakajima M."/>
            <person name="Narusaka M."/>
            <person name="Seki M."/>
            <person name="Sakurai T."/>
            <person name="Satou M."/>
            <person name="Tamse R."/>
            <person name="Vaysberg M."/>
            <person name="Wallender E.K."/>
            <person name="Wong C."/>
            <person name="Yamamura Y."/>
            <person name="Yuan S."/>
            <person name="Shinozaki K."/>
            <person name="Davis R.W."/>
            <person name="Theologis A."/>
            <person name="Ecker J.R."/>
        </authorList>
    </citation>
    <scope>NUCLEOTIDE SEQUENCE [LARGE SCALE MRNA]</scope>
    <source>
        <strain>cv. Columbia</strain>
    </source>
</reference>
<reference key="4">
    <citation type="submission" date="2002-03" db="EMBL/GenBank/DDBJ databases">
        <title>Full-length cDNA from Arabidopsis thaliana.</title>
        <authorList>
            <person name="Brover V.V."/>
            <person name="Troukhan M.E."/>
            <person name="Alexandrov N.A."/>
            <person name="Lu Y.-P."/>
            <person name="Flavell R.B."/>
            <person name="Feldmann K.A."/>
        </authorList>
    </citation>
    <scope>NUCLEOTIDE SEQUENCE [LARGE SCALE MRNA]</scope>
</reference>
<reference key="5">
    <citation type="journal article" date="2004" name="Proc. Natl. Acad. Sci. U.S.A.">
        <title>AtNAP7 is a plastidic SufC-like ATP-binding cassette/ATPase essential for Arabidopsis embryogenesis.</title>
        <authorList>
            <person name="Xu X.M."/>
            <person name="Moeller S.G."/>
        </authorList>
    </citation>
    <scope>IDENTIFICATION</scope>
    <scope>FUNCTION</scope>
    <scope>INTERACTION WITH NAP6</scope>
    <scope>SUBCELLULAR LOCATION</scope>
    <scope>TISSUE SPECIFICITY</scope>
    <scope>DEVELOPMENTAL STAGE</scope>
</reference>
<reference key="6">
    <citation type="journal article" date="2001" name="J. Biol. Chem.">
        <title>The Arabidopsis thaliana ABC protein superfamily, a complete inventory.</title>
        <authorList>
            <person name="Sanchez-Fernandez R."/>
            <person name="Davies T.G."/>
            <person name="Coleman J.O."/>
            <person name="Rea P.A."/>
        </authorList>
    </citation>
    <scope>GENE FAMILY</scope>
    <scope>NOMENCLATURE</scope>
</reference>
<reference key="7">
    <citation type="journal article" date="2007" name="Mol. Cell. Proteomics">
        <title>Multidimensional protein identification technology (MudPIT) analysis of ubiquitinated proteins in plants.</title>
        <authorList>
            <person name="Maor R."/>
            <person name="Jones A."/>
            <person name="Nuehse T.S."/>
            <person name="Studholme D.J."/>
            <person name="Peck S.C."/>
            <person name="Shirasu K."/>
        </authorList>
    </citation>
    <scope>IDENTIFICATION BY MASS SPECTROMETRY [LARGE SCALE ANALYSIS]</scope>
    <source>
        <strain>cv. Landsberg erecta</strain>
    </source>
</reference>
<reference key="8">
    <citation type="journal article" date="2008" name="Trends Plant Sci.">
        <title>Plant ABC proteins - a unified nomenclature and updated inventory.</title>
        <authorList>
            <person name="Verrier P.J."/>
            <person name="Bird D."/>
            <person name="Burla B."/>
            <person name="Dassa E."/>
            <person name="Forestier C."/>
            <person name="Geisler M."/>
            <person name="Klein M."/>
            <person name="Kolukisaoglu H.U."/>
            <person name="Lee Y."/>
            <person name="Martinoia E."/>
            <person name="Murphy A."/>
            <person name="Rea P.A."/>
            <person name="Samuels L."/>
            <person name="Schulz B."/>
            <person name="Spalding E.J."/>
            <person name="Yazaki K."/>
            <person name="Theodoulou F.L."/>
        </authorList>
    </citation>
    <scope>GENE FAMILY</scope>
    <scope>NOMENCLATURE</scope>
</reference>
<protein>
    <recommendedName>
        <fullName>ABC transporter I family member 6, chloroplastic</fullName>
        <shortName>ABC transporter ABCI.6</shortName>
        <shortName>AtABCI6</shortName>
    </recommendedName>
    <alternativeName>
        <fullName>ABC transporter ATPase</fullName>
    </alternativeName>
    <alternativeName>
        <fullName>Non-intrinsic ABC protein 7</fullName>
        <shortName>AtNAP7</shortName>
    </alternativeName>
    <alternativeName>
        <fullName>Plastid SufC-like protein</fullName>
    </alternativeName>
</protein>
<name>AB6I_ARATH</name>
<comment type="function">
    <text evidence="3">Essential protein. Required during embryo development, especially at early stages. Involved in chloroplast differentiation.</text>
</comment>
<comment type="subunit">
    <text evidence="3">Interacts with NAP6.</text>
</comment>
<comment type="subcellular location">
    <subcellularLocation>
        <location evidence="3">Plastid</location>
        <location evidence="3">Chloroplast</location>
    </subcellularLocation>
</comment>
<comment type="tissue specificity">
    <text evidence="3">Present in all organs, with higher levels in aerial parts.</text>
</comment>
<comment type="developmental stage">
    <text evidence="3">During seed development, first expressed in developing endosperm, embryo and suspensor and later restricted to the embryo. In seedlings, confined to apical meristems and vascular tissues. In flowers, mostly present in floral meristem, in filaments of the stamen and in the style.</text>
</comment>
<comment type="similarity">
    <text evidence="4">Belongs to the ABC transporter superfamily. ABCI family.</text>
</comment>
<comment type="sequence caution" evidence="4">
    <conflict type="erroneous gene model prediction">
        <sequence resource="EMBL-CDS" id="AAF19582"/>
    </conflict>
</comment>
<comment type="sequence caution" evidence="4">
    <conflict type="erroneous gene model prediction">
        <sequence resource="EMBL-CDS" id="AAF76373"/>
    </conflict>
</comment>
<sequence length="338" mass="36931">MAGVNLQLRHAYSIAQFVPTVSSPPPLPTQRVRLGTSPSRVLLCNLRANSAAAPILRTTRRSVIVSASSVSSAVDSDSLVEDRDDVGRIPLLEVRDLRAVIAESRQEILKGVNLVVYEGEVHAVMGKNGSGKSTFSKVLVGHPDYEVTGGSIVFKGQNLLDMEPEDRSLAGLFMSFQSPVEIPGVSNMDFLNMAFNARKRKLGQPELDPIQFYSHLVSKLEVVNMKTDFLNRNVNEGFSGGERKRNEILQLAVLGAELAILDEIDSGLDVDALQDVAKAVNGLLTPKNSVLMITHYQRLLDYIKPTLIHIMENGRIIKTGDNSLAKLLEKEGYKAISG</sequence>
<keyword id="KW-0067">ATP-binding</keyword>
<keyword id="KW-0150">Chloroplast</keyword>
<keyword id="KW-0547">Nucleotide-binding</keyword>
<keyword id="KW-0934">Plastid</keyword>
<keyword id="KW-1185">Reference proteome</keyword>
<keyword id="KW-0809">Transit peptide</keyword>
<keyword id="KW-0813">Transport</keyword>
<gene>
    <name type="primary">ABCI6</name>
    <name type="synonym">NAP7</name>
    <name type="ordered locus">At3g10670</name>
    <name type="ORF">F13M14.4</name>
    <name type="ORF">F18K10.29</name>
    <name type="ORF">T7M13.25</name>
</gene>
<organism>
    <name type="scientific">Arabidopsis thaliana</name>
    <name type="common">Mouse-ear cress</name>
    <dbReference type="NCBI Taxonomy" id="3702"/>
    <lineage>
        <taxon>Eukaryota</taxon>
        <taxon>Viridiplantae</taxon>
        <taxon>Streptophyta</taxon>
        <taxon>Embryophyta</taxon>
        <taxon>Tracheophyta</taxon>
        <taxon>Spermatophyta</taxon>
        <taxon>Magnoliopsida</taxon>
        <taxon>eudicotyledons</taxon>
        <taxon>Gunneridae</taxon>
        <taxon>Pentapetalae</taxon>
        <taxon>rosids</taxon>
        <taxon>malvids</taxon>
        <taxon>Brassicales</taxon>
        <taxon>Brassicaceae</taxon>
        <taxon>Camelineae</taxon>
        <taxon>Arabidopsis</taxon>
    </lineage>
</organism>
<accession>Q9CAF5</accession>
<accession>Q8LF74</accession>
<accession>Q9LPN3</accession>
<accession>Q9SG74</accession>
<dbReference type="EMBL" id="AC011560">
    <property type="protein sequence ID" value="AAG51398.1"/>
    <property type="molecule type" value="Genomic_DNA"/>
</dbReference>
<dbReference type="EMBL" id="AC011708">
    <property type="protein sequence ID" value="AAF19582.1"/>
    <property type="status" value="ALT_SEQ"/>
    <property type="molecule type" value="Genomic_DNA"/>
</dbReference>
<dbReference type="EMBL" id="AC013428">
    <property type="protein sequence ID" value="AAF76373.1"/>
    <property type="status" value="ALT_SEQ"/>
    <property type="molecule type" value="Genomic_DNA"/>
</dbReference>
<dbReference type="EMBL" id="CP002686">
    <property type="protein sequence ID" value="AEE74941.1"/>
    <property type="molecule type" value="Genomic_DNA"/>
</dbReference>
<dbReference type="EMBL" id="AY035125">
    <property type="protein sequence ID" value="AAK59630.1"/>
    <property type="molecule type" value="mRNA"/>
</dbReference>
<dbReference type="EMBL" id="AY113917">
    <property type="protein sequence ID" value="AAM44965.1"/>
    <property type="molecule type" value="mRNA"/>
</dbReference>
<dbReference type="EMBL" id="AY085010">
    <property type="protein sequence ID" value="AAM61568.1"/>
    <property type="molecule type" value="mRNA"/>
</dbReference>
<dbReference type="EMBL" id="BK005580">
    <property type="protein sequence ID" value="DAA05587.1"/>
    <property type="molecule type" value="mRNA"/>
</dbReference>
<dbReference type="RefSeq" id="NP_187678.1">
    <property type="nucleotide sequence ID" value="NM_111903.3"/>
</dbReference>
<dbReference type="SMR" id="Q9CAF5"/>
<dbReference type="BioGRID" id="5570">
    <property type="interactions" value="1"/>
</dbReference>
<dbReference type="FunCoup" id="Q9CAF5">
    <property type="interactions" value="766"/>
</dbReference>
<dbReference type="IntAct" id="Q9CAF5">
    <property type="interactions" value="2"/>
</dbReference>
<dbReference type="STRING" id="3702.Q9CAF5"/>
<dbReference type="PaxDb" id="3702-AT3G10670.1"/>
<dbReference type="ProteomicsDB" id="244599"/>
<dbReference type="EnsemblPlants" id="AT3G10670.1">
    <property type="protein sequence ID" value="AT3G10670.1"/>
    <property type="gene ID" value="AT3G10670"/>
</dbReference>
<dbReference type="GeneID" id="820236"/>
<dbReference type="Gramene" id="AT3G10670.1">
    <property type="protein sequence ID" value="AT3G10670.1"/>
    <property type="gene ID" value="AT3G10670"/>
</dbReference>
<dbReference type="KEGG" id="ath:AT3G10670"/>
<dbReference type="Araport" id="AT3G10670"/>
<dbReference type="TAIR" id="AT3G10670">
    <property type="gene designation" value="NAP7"/>
</dbReference>
<dbReference type="eggNOG" id="ENOG502QS88">
    <property type="taxonomic scope" value="Eukaryota"/>
</dbReference>
<dbReference type="HOGENOM" id="CLU_000604_48_0_1"/>
<dbReference type="InParanoid" id="Q9CAF5"/>
<dbReference type="OMA" id="MAMLEPK"/>
<dbReference type="PhylomeDB" id="Q9CAF5"/>
<dbReference type="PRO" id="PR:Q9CAF5"/>
<dbReference type="Proteomes" id="UP000006548">
    <property type="component" value="Chromosome 3"/>
</dbReference>
<dbReference type="ExpressionAtlas" id="Q9CAF5">
    <property type="expression patterns" value="baseline and differential"/>
</dbReference>
<dbReference type="GO" id="GO:0009507">
    <property type="term" value="C:chloroplast"/>
    <property type="evidence" value="ECO:0000314"/>
    <property type="project" value="TAIR"/>
</dbReference>
<dbReference type="GO" id="GO:0009570">
    <property type="term" value="C:chloroplast stroma"/>
    <property type="evidence" value="ECO:0007005"/>
    <property type="project" value="TAIR"/>
</dbReference>
<dbReference type="GO" id="GO:0005829">
    <property type="term" value="C:cytosol"/>
    <property type="evidence" value="ECO:0007005"/>
    <property type="project" value="TAIR"/>
</dbReference>
<dbReference type="GO" id="GO:0005524">
    <property type="term" value="F:ATP binding"/>
    <property type="evidence" value="ECO:0007669"/>
    <property type="project" value="UniProtKB-KW"/>
</dbReference>
<dbReference type="GO" id="GO:0016887">
    <property type="term" value="F:ATP hydrolysis activity"/>
    <property type="evidence" value="ECO:0007669"/>
    <property type="project" value="InterPro"/>
</dbReference>
<dbReference type="GO" id="GO:0042626">
    <property type="term" value="F:ATPase-coupled transmembrane transporter activity"/>
    <property type="evidence" value="ECO:0000314"/>
    <property type="project" value="TAIR"/>
</dbReference>
<dbReference type="GO" id="GO:0009793">
    <property type="term" value="P:embryo development ending in seed dormancy"/>
    <property type="evidence" value="ECO:0000315"/>
    <property type="project" value="TAIR"/>
</dbReference>
<dbReference type="GO" id="GO:0010027">
    <property type="term" value="P:thylakoid membrane organization"/>
    <property type="evidence" value="ECO:0000315"/>
    <property type="project" value="TAIR"/>
</dbReference>
<dbReference type="CDD" id="cd03217">
    <property type="entry name" value="ABC_FeS_Assembly"/>
    <property type="match status" value="1"/>
</dbReference>
<dbReference type="FunFam" id="3.40.50.300:FF:000405">
    <property type="entry name" value="Fe-S cluster assembly ATPase SufC"/>
    <property type="match status" value="1"/>
</dbReference>
<dbReference type="Gene3D" id="3.40.50.300">
    <property type="entry name" value="P-loop containing nucleotide triphosphate hydrolases"/>
    <property type="match status" value="1"/>
</dbReference>
<dbReference type="InterPro" id="IPR003593">
    <property type="entry name" value="AAA+_ATPase"/>
</dbReference>
<dbReference type="InterPro" id="IPR003439">
    <property type="entry name" value="ABC_transporter-like_ATP-bd"/>
</dbReference>
<dbReference type="InterPro" id="IPR017871">
    <property type="entry name" value="ABC_transporter-like_CS"/>
</dbReference>
<dbReference type="InterPro" id="IPR010230">
    <property type="entry name" value="FeS-cluster_ATPase_SufC"/>
</dbReference>
<dbReference type="InterPro" id="IPR027417">
    <property type="entry name" value="P-loop_NTPase"/>
</dbReference>
<dbReference type="NCBIfam" id="TIGR01978">
    <property type="entry name" value="sufC"/>
    <property type="match status" value="1"/>
</dbReference>
<dbReference type="PANTHER" id="PTHR43204">
    <property type="entry name" value="ABC TRANSPORTER I FAMILY MEMBER 6, CHLOROPLASTIC"/>
    <property type="match status" value="1"/>
</dbReference>
<dbReference type="PANTHER" id="PTHR43204:SF1">
    <property type="entry name" value="ABC TRANSPORTER I FAMILY MEMBER 6, CHLOROPLASTIC"/>
    <property type="match status" value="1"/>
</dbReference>
<dbReference type="Pfam" id="PF00005">
    <property type="entry name" value="ABC_tran"/>
    <property type="match status" value="1"/>
</dbReference>
<dbReference type="SMART" id="SM00382">
    <property type="entry name" value="AAA"/>
    <property type="match status" value="1"/>
</dbReference>
<dbReference type="SUPFAM" id="SSF52540">
    <property type="entry name" value="P-loop containing nucleoside triphosphate hydrolases"/>
    <property type="match status" value="1"/>
</dbReference>
<dbReference type="PROSITE" id="PS00211">
    <property type="entry name" value="ABC_TRANSPORTER_1"/>
    <property type="match status" value="1"/>
</dbReference>
<dbReference type="PROSITE" id="PS50893">
    <property type="entry name" value="ABC_TRANSPORTER_2"/>
    <property type="match status" value="1"/>
</dbReference>
<proteinExistence type="evidence at protein level"/>
<evidence type="ECO:0000255" key="1"/>
<evidence type="ECO:0000255" key="2">
    <source>
        <dbReference type="PROSITE-ProRule" id="PRU00434"/>
    </source>
</evidence>
<evidence type="ECO:0000269" key="3">
    <source>
    </source>
</evidence>
<evidence type="ECO:0000305" key="4"/>
<feature type="transit peptide" description="Chloroplast" evidence="1">
    <location>
        <begin position="1"/>
        <end position="66"/>
    </location>
</feature>
<feature type="chain" id="PRO_0000250659" description="ABC transporter I family member 6, chloroplastic">
    <location>
        <begin position="67"/>
        <end position="338"/>
    </location>
</feature>
<feature type="domain" description="ABC transporter" evidence="2">
    <location>
        <begin position="92"/>
        <end position="338"/>
    </location>
</feature>
<feature type="binding site" evidence="2">
    <location>
        <begin position="126"/>
        <end position="133"/>
    </location>
    <ligand>
        <name>ATP</name>
        <dbReference type="ChEBI" id="CHEBI:30616"/>
    </ligand>
</feature>
<feature type="sequence conflict" description="In Ref. 4; AAM61568." evidence="4" ref="4">
    <original>S</original>
    <variation>F</variation>
    <location>
        <position position="23"/>
    </location>
</feature>